<organism>
    <name type="scientific">Allochromatium vinosum</name>
    <name type="common">Chromatium vinosum</name>
    <dbReference type="NCBI Taxonomy" id="1049"/>
    <lineage>
        <taxon>Bacteria</taxon>
        <taxon>Pseudomonadati</taxon>
        <taxon>Pseudomonadota</taxon>
        <taxon>Gammaproteobacteria</taxon>
        <taxon>Chromatiales</taxon>
        <taxon>Chromatiaceae</taxon>
        <taxon>Allochromatium</taxon>
    </lineage>
</organism>
<reference evidence="8 9" key="1">
    <citation type="journal article" date="2006" name="Mol. Microbiol.">
        <title>Thiosulphate oxidation in the phototrophic sulphur bacterium Allochromatium vinosum.</title>
        <authorList>
            <person name="Hensen D."/>
            <person name="Sperling D."/>
            <person name="Trueper H.G."/>
            <person name="Brune D.C."/>
            <person name="Dahl C."/>
        </authorList>
    </citation>
    <scope>NUCLEOTIDE SEQUENCE [GENOMIC DNA]</scope>
    <scope>FUNCTION</scope>
    <scope>COFACTOR</scope>
    <scope>SUBUNIT</scope>
    <scope>INDUCTION BY THIOSULFATE</scope>
    <scope>DISRUPTION PHENOTYPE</scope>
</reference>
<proteinExistence type="evidence at protein level"/>
<comment type="function">
    <text evidence="2 6">C-type monoheme cytochrome, which is part of the SoxAX cytochrome complex involved in sulfur oxidation. The SoxAX complex catalyzes the formation of a heterodisulfide bond between the conserved cysteine residue on a sulfur carrier SoxYZ complex subunit SoxY and thiosulfate or other inorganic sulfur substrates. This leads to the intermediary formation of conspicuous sulfur globules inside of the cells.</text>
</comment>
<comment type="catalytic activity">
    <reaction evidence="2">
        <text>L-cysteinyl-[SoxY protein] + thiosulfate + 2 Fe(III)-[cytochrome c] = S-sulfosulfanyl-L-cysteinyl-[SoxY protein] + 2 Fe(II)-[cytochrome c] + 2 H(+)</text>
        <dbReference type="Rhea" id="RHEA:56720"/>
        <dbReference type="Rhea" id="RHEA-COMP:10350"/>
        <dbReference type="Rhea" id="RHEA-COMP:14328"/>
        <dbReference type="Rhea" id="RHEA-COMP:14399"/>
        <dbReference type="Rhea" id="RHEA-COMP:14691"/>
        <dbReference type="ChEBI" id="CHEBI:15378"/>
        <dbReference type="ChEBI" id="CHEBI:29033"/>
        <dbReference type="ChEBI" id="CHEBI:29034"/>
        <dbReference type="ChEBI" id="CHEBI:29950"/>
        <dbReference type="ChEBI" id="CHEBI:33542"/>
        <dbReference type="ChEBI" id="CHEBI:139321"/>
        <dbReference type="EC" id="2.8.5.2"/>
    </reaction>
</comment>
<comment type="catalytic activity">
    <reaction evidence="2">
        <text>S-sulfanyl-L-cysteinyl-[SoxY protein] + thiosulfate + 2 Fe(III)-[cytochrome c] = S-(2-sulfodisulfanyl)-L-cysteinyl-[SoxY protein] + 2 Fe(II)-[cytochrome c] + 2 H(+)</text>
        <dbReference type="Rhea" id="RHEA:51224"/>
        <dbReference type="Rhea" id="RHEA-COMP:10350"/>
        <dbReference type="Rhea" id="RHEA-COMP:14399"/>
        <dbReference type="Rhea" id="RHEA-COMP:14689"/>
        <dbReference type="Rhea" id="RHEA-COMP:14690"/>
        <dbReference type="ChEBI" id="CHEBI:15378"/>
        <dbReference type="ChEBI" id="CHEBI:29033"/>
        <dbReference type="ChEBI" id="CHEBI:29034"/>
        <dbReference type="ChEBI" id="CHEBI:33542"/>
        <dbReference type="ChEBI" id="CHEBI:61963"/>
        <dbReference type="ChEBI" id="CHEBI:140664"/>
        <dbReference type="EC" id="2.8.5.2"/>
    </reaction>
</comment>
<comment type="cofactor">
    <cofactor evidence="2 6">
        <name>heme</name>
        <dbReference type="ChEBI" id="CHEBI:30413"/>
    </cofactor>
    <text evidence="2 6">Binds 1 heme group per subunit.</text>
</comment>
<comment type="subunit">
    <text evidence="6">Heterodimer of SoxA and SoxX.</text>
</comment>
<comment type="subcellular location">
    <subcellularLocation>
        <location evidence="2">Periplasm</location>
    </subcellularLocation>
</comment>
<comment type="induction">
    <text evidence="6">By thiosulfate.</text>
</comment>
<comment type="PTM">
    <text evidence="3">Cysteine persulfide at Cys-242.</text>
</comment>
<comment type="disruption phenotype">
    <text evidence="6">No oxidation of thiosulfate with a simultaneous deletion of soxX alone or together with a deletion of soxB.</text>
</comment>
<comment type="similarity">
    <text evidence="5">Belongs to the SoxA family.</text>
</comment>
<dbReference type="EC" id="2.8.5.2" evidence="2"/>
<dbReference type="EMBL" id="DQ441405">
    <property type="protein sequence ID" value="ABE01361.1"/>
    <property type="molecule type" value="Genomic_DNA"/>
</dbReference>
<dbReference type="SMR" id="Q1W3E4"/>
<dbReference type="OMA" id="EEFPPYE"/>
<dbReference type="BioCyc" id="MetaCyc:MONOMER-16066"/>
<dbReference type="BRENDA" id="2.8.5.2">
    <property type="organism ID" value="257"/>
</dbReference>
<dbReference type="GO" id="GO:0070069">
    <property type="term" value="C:cytochrome complex"/>
    <property type="evidence" value="ECO:0000314"/>
    <property type="project" value="UniProtKB"/>
</dbReference>
<dbReference type="GO" id="GO:0042597">
    <property type="term" value="C:periplasmic space"/>
    <property type="evidence" value="ECO:0007669"/>
    <property type="project" value="UniProtKB-SubCell"/>
</dbReference>
<dbReference type="GO" id="GO:0009055">
    <property type="term" value="F:electron transfer activity"/>
    <property type="evidence" value="ECO:0000316"/>
    <property type="project" value="UniProtKB"/>
</dbReference>
<dbReference type="GO" id="GO:0020037">
    <property type="term" value="F:heme binding"/>
    <property type="evidence" value="ECO:0000314"/>
    <property type="project" value="UniProtKB"/>
</dbReference>
<dbReference type="GO" id="GO:0005506">
    <property type="term" value="F:iron ion binding"/>
    <property type="evidence" value="ECO:0000314"/>
    <property type="project" value="UniProtKB"/>
</dbReference>
<dbReference type="GO" id="GO:0016491">
    <property type="term" value="F:oxidoreductase activity"/>
    <property type="evidence" value="ECO:0000316"/>
    <property type="project" value="UniProtKB"/>
</dbReference>
<dbReference type="GO" id="GO:0016669">
    <property type="term" value="F:oxidoreductase activity, acting on a sulfur group of donors, cytochrome as acceptor"/>
    <property type="evidence" value="ECO:0000316"/>
    <property type="project" value="UniProtKB"/>
</dbReference>
<dbReference type="GO" id="GO:0046982">
    <property type="term" value="F:protein heterodimerization activity"/>
    <property type="evidence" value="ECO:0000353"/>
    <property type="project" value="UniProtKB"/>
</dbReference>
<dbReference type="GO" id="GO:0016740">
    <property type="term" value="F:transferase activity"/>
    <property type="evidence" value="ECO:0007669"/>
    <property type="project" value="UniProtKB-KW"/>
</dbReference>
<dbReference type="GO" id="GO:0019417">
    <property type="term" value="P:sulfur oxidation"/>
    <property type="evidence" value="ECO:0000316"/>
    <property type="project" value="UniProtKB"/>
</dbReference>
<dbReference type="Gene3D" id="1.10.760.10">
    <property type="entry name" value="Cytochrome c-like domain"/>
    <property type="match status" value="2"/>
</dbReference>
<dbReference type="InterPro" id="IPR009056">
    <property type="entry name" value="Cyt_c-like_dom"/>
</dbReference>
<dbReference type="InterPro" id="IPR036909">
    <property type="entry name" value="Cyt_c-like_dom_sf"/>
</dbReference>
<dbReference type="InterPro" id="IPR025710">
    <property type="entry name" value="SoxA"/>
</dbReference>
<dbReference type="NCBIfam" id="TIGR04484">
    <property type="entry name" value="thiosulf_SoxA"/>
    <property type="match status" value="1"/>
</dbReference>
<dbReference type="Pfam" id="PF21342">
    <property type="entry name" value="SoxA-TsdA_cyt-c"/>
    <property type="match status" value="1"/>
</dbReference>
<dbReference type="PIRSF" id="PIRSF038455">
    <property type="entry name" value="SoxA"/>
    <property type="match status" value="1"/>
</dbReference>
<dbReference type="SUPFAM" id="SSF46626">
    <property type="entry name" value="Cytochrome c"/>
    <property type="match status" value="2"/>
</dbReference>
<protein>
    <recommendedName>
        <fullName>L-cysteine S-thiosulfotransferase subunit SoxA</fullName>
        <ecNumber evidence="2">2.8.5.2</ecNumber>
    </recommendedName>
    <alternativeName>
        <fullName evidence="7">Cytochrome c550 subunit monoheme</fullName>
    </alternativeName>
    <alternativeName>
        <fullName evidence="9">Protein SoxA</fullName>
    </alternativeName>
    <alternativeName>
        <fullName evidence="3">SoxAX cytochrome complex subunit A</fullName>
    </alternativeName>
    <alternativeName>
        <fullName evidence="7">Sulfur oxidizing protein A</fullName>
    </alternativeName>
    <alternativeName>
        <fullName evidence="1">Thiosulfate-oxidizing multienzyme system protein SoxA</fullName>
        <shortName evidence="1">TOMES protein SoxA</shortName>
    </alternativeName>
</protein>
<accession>Q1W3E4</accession>
<sequence length="281" mass="31730">MTKHGFLLATLVLAGATLPIGPVTAATPEEEQAAFQAYFKQRFPNVPEDEFKNGTYAIDPVTRENWEAIEEFPPYENAISQGETLWNTPFADGQGYADCFPDGPAIMNHYPRWDRERGQVMTLPLALNACRTAHGETPLKYKKGPIADLLAYIAFESRGQITRVEIPQDDPRALAAYEQGKRFYFARRGQLNFACAHCHLATSGTKLRTETLSPAYGHTTHWPVYRSEWGEMGTLHRRFAGCNEQVRAKAFEPQGEEYRNLEYFLTYMNNGLELNGPGARK</sequence>
<evidence type="ECO:0000250" key="1">
    <source>
        <dbReference type="UniProtKB" id="D7A6E5"/>
    </source>
</evidence>
<evidence type="ECO:0000250" key="2">
    <source>
        <dbReference type="UniProtKB" id="Q8KDM7"/>
    </source>
</evidence>
<evidence type="ECO:0000250" key="3">
    <source>
        <dbReference type="UniProtKB" id="Q8RLX0"/>
    </source>
</evidence>
<evidence type="ECO:0000250" key="4">
    <source>
        <dbReference type="UniProtKB" id="Q939U1"/>
    </source>
</evidence>
<evidence type="ECO:0000255" key="5"/>
<evidence type="ECO:0000269" key="6">
    <source>
    </source>
</evidence>
<evidence type="ECO:0000303" key="7">
    <source>
    </source>
</evidence>
<evidence type="ECO:0000305" key="8"/>
<evidence type="ECO:0000312" key="9">
    <source>
        <dbReference type="EMBL" id="ABE01361.1"/>
    </source>
</evidence>
<keyword id="KW-1015">Disulfide bond</keyword>
<keyword id="KW-0249">Electron transport</keyword>
<keyword id="KW-0349">Heme</keyword>
<keyword id="KW-0408">Iron</keyword>
<keyword id="KW-0479">Metal-binding</keyword>
<keyword id="KW-0574">Periplasm</keyword>
<keyword id="KW-0732">Signal</keyword>
<keyword id="KW-0808">Transferase</keyword>
<keyword id="KW-0813">Transport</keyword>
<feature type="signal peptide" evidence="5">
    <location>
        <begin position="1"/>
        <end position="25"/>
    </location>
</feature>
<feature type="chain" id="PRO_5000006509" description="L-cysteine S-thiosulfotransferase subunit SoxA">
    <location>
        <begin position="26"/>
        <end position="281"/>
    </location>
</feature>
<feature type="domain" description="Cytochrome c" evidence="5">
    <location>
        <begin position="175"/>
        <end position="281"/>
    </location>
</feature>
<feature type="active site" description="Cysteine persulfide intermediate" evidence="1">
    <location>
        <position position="242"/>
    </location>
</feature>
<feature type="binding site" description="covalent" evidence="1">
    <location>
        <position position="195"/>
    </location>
    <ligand>
        <name>heme</name>
        <dbReference type="ChEBI" id="CHEBI:30413"/>
    </ligand>
</feature>
<feature type="binding site" description="axial binding residue" evidence="1">
    <location>
        <position position="199"/>
    </location>
    <ligand>
        <name>heme</name>
        <dbReference type="ChEBI" id="CHEBI:30413"/>
    </ligand>
    <ligandPart>
        <name>Fe</name>
        <dbReference type="ChEBI" id="CHEBI:18248"/>
    </ligandPart>
</feature>
<feature type="binding site" evidence="4">
    <location>
        <position position="238"/>
    </location>
    <ligand>
        <name>substrate</name>
    </ligand>
</feature>
<feature type="binding site" description="axial binding residue" evidence="1">
    <location>
        <position position="242"/>
    </location>
    <ligand>
        <name>heme</name>
        <dbReference type="ChEBI" id="CHEBI:30413"/>
    </ligand>
    <ligandPart>
        <name>Fe</name>
        <dbReference type="ChEBI" id="CHEBI:18248"/>
    </ligandPart>
</feature>
<feature type="disulfide bond" evidence="3">
    <location>
        <begin position="99"/>
        <end position="130"/>
    </location>
</feature>
<gene>
    <name evidence="9" type="primary">soxA</name>
</gene>
<name>SOXA_ALLVI</name>